<name>TF3B_CANAL</name>
<keyword id="KW-0010">Activator</keyword>
<keyword id="KW-0479">Metal-binding</keyword>
<keyword id="KW-0539">Nucleus</keyword>
<keyword id="KW-1185">Reference proteome</keyword>
<keyword id="KW-0677">Repeat</keyword>
<keyword id="KW-0804">Transcription</keyword>
<keyword id="KW-0805">Transcription regulation</keyword>
<keyword id="KW-0862">Zinc</keyword>
<keyword id="KW-0863">Zinc-finger</keyword>
<comment type="function">
    <text>General activator of RNA polymerase III transcription. Interacts with TBP. Binds to Pol III subunit C34 and to the TAU135 component of TFIIIC.</text>
</comment>
<comment type="subunit">
    <text>TFIIIB comprises the TATA-binding protein (TBP), the B-related factor (BRF) and a 70 kDa polypeptide.</text>
</comment>
<comment type="subcellular location">
    <subcellularLocation>
        <location>Nucleus</location>
    </subcellularLocation>
</comment>
<comment type="similarity">
    <text evidence="3">Belongs to the TFIIB family.</text>
</comment>
<sequence>MSKPRKQQKCKTCGHTQFDVNRYTAAGDVSCLRCGTVLEENPIVSEVQFGESSSGAAMVQGAMVGADQARATFAGGRQNAMESREQTLSNGKRKIKRIAAALKIPDYIAEAAGEWFRLALTLNFVQGRRSNNVLATCLYVACRKERTHHMLIDFSSRLQISVYSLGATFLKMVKALHITSLPLADPSLFIQHFVEKLDFKDKATKVAKDAVKLAHRMAADWIHEGRRPAGIAGACVLLAARMNNFRRSHAEIVAVSHVGEETLQRRLNEFKKTKAGTLSVKSFREVENLESSNPPSFEKNRAMELKISKKLQQQQTDNFEDLSKMTEEEKQSVFGKLSKEEAQKQLLMNTILSDITITTENLNDQMDRILKMKKSSLENSLYKTPYELALANGSEQDPSKIWNINKPKNLVANLPKTDDILQNVSSEVELNSDDDDEIVLESKLTEEEVAIKERIWTGLNHDYLVEQEKKRLKQEADELTGNTSKSSSGNRRKRNKSSLPAELRKELGDIDLDEDGTPRSAADSAKMYISKTSVSKKINYDSLKGLLGGNMGF</sequence>
<accession>P43072</accession>
<accession>A0A1D8PT19</accession>
<accession>Q59PR5</accession>
<protein>
    <recommendedName>
        <fullName>Transcription factor IIIB 70 kDa subunit</fullName>
        <shortName>TFIIIB</shortName>
    </recommendedName>
    <alternativeName>
        <fullName>B-related factor 1</fullName>
        <shortName>BRF-1</shortName>
    </alternativeName>
</protein>
<reference key="1">
    <citation type="journal article" date="1994" name="Genes Dev.">
        <title>Conserved functional domains of the RNA polymerase III general transcription factor BRF.</title>
        <authorList>
            <person name="Khoo B."/>
            <person name="Brophy B."/>
            <person name="Jackson S.P."/>
        </authorList>
    </citation>
    <scope>NUCLEOTIDE SEQUENCE [GENOMIC DNA]</scope>
</reference>
<reference key="2">
    <citation type="journal article" date="2004" name="Proc. Natl. Acad. Sci. U.S.A.">
        <title>The diploid genome sequence of Candida albicans.</title>
        <authorList>
            <person name="Jones T."/>
            <person name="Federspiel N.A."/>
            <person name="Chibana H."/>
            <person name="Dungan J."/>
            <person name="Kalman S."/>
            <person name="Magee B.B."/>
            <person name="Newport G."/>
            <person name="Thorstenson Y.R."/>
            <person name="Agabian N."/>
            <person name="Magee P.T."/>
            <person name="Davis R.W."/>
            <person name="Scherer S."/>
        </authorList>
    </citation>
    <scope>NUCLEOTIDE SEQUENCE [LARGE SCALE GENOMIC DNA]</scope>
    <source>
        <strain>SC5314 / ATCC MYA-2876</strain>
    </source>
</reference>
<reference key="3">
    <citation type="journal article" date="2007" name="Genome Biol.">
        <title>Assembly of the Candida albicans genome into sixteen supercontigs aligned on the eight chromosomes.</title>
        <authorList>
            <person name="van het Hoog M."/>
            <person name="Rast T.J."/>
            <person name="Martchenko M."/>
            <person name="Grindle S."/>
            <person name="Dignard D."/>
            <person name="Hogues H."/>
            <person name="Cuomo C."/>
            <person name="Berriman M."/>
            <person name="Scherer S."/>
            <person name="Magee B.B."/>
            <person name="Whiteway M."/>
            <person name="Chibana H."/>
            <person name="Nantel A."/>
            <person name="Magee P.T."/>
        </authorList>
    </citation>
    <scope>GENOME REANNOTATION</scope>
    <source>
        <strain>SC5314 / ATCC MYA-2876</strain>
    </source>
</reference>
<reference key="4">
    <citation type="journal article" date="2013" name="Genome Biol.">
        <title>Assembly of a phased diploid Candida albicans genome facilitates allele-specific measurements and provides a simple model for repeat and indel structure.</title>
        <authorList>
            <person name="Muzzey D."/>
            <person name="Schwartz K."/>
            <person name="Weissman J.S."/>
            <person name="Sherlock G."/>
        </authorList>
    </citation>
    <scope>NUCLEOTIDE SEQUENCE [LARGE SCALE GENOMIC DNA]</scope>
    <scope>GENOME REANNOTATION</scope>
    <source>
        <strain>SC5314 / ATCC MYA-2876</strain>
    </source>
</reference>
<proteinExistence type="inferred from homology"/>
<organism>
    <name type="scientific">Candida albicans (strain SC5314 / ATCC MYA-2876)</name>
    <name type="common">Yeast</name>
    <dbReference type="NCBI Taxonomy" id="237561"/>
    <lineage>
        <taxon>Eukaryota</taxon>
        <taxon>Fungi</taxon>
        <taxon>Dikarya</taxon>
        <taxon>Ascomycota</taxon>
        <taxon>Saccharomycotina</taxon>
        <taxon>Pichiomycetes</taxon>
        <taxon>Debaryomycetaceae</taxon>
        <taxon>Candida/Lodderomyces clade</taxon>
        <taxon>Candida</taxon>
    </lineage>
</organism>
<dbReference type="EMBL" id="Z47202">
    <property type="protein sequence ID" value="CAA87398.1"/>
    <property type="molecule type" value="Genomic_DNA"/>
</dbReference>
<dbReference type="EMBL" id="CP017630">
    <property type="protein sequence ID" value="AOW31281.1"/>
    <property type="molecule type" value="Genomic_DNA"/>
</dbReference>
<dbReference type="PIR" id="B55483">
    <property type="entry name" value="B55483"/>
</dbReference>
<dbReference type="RefSeq" id="XP_711715.1">
    <property type="nucleotide sequence ID" value="XM_706623.1"/>
</dbReference>
<dbReference type="SMR" id="P43072"/>
<dbReference type="FunCoup" id="P43072">
    <property type="interactions" value="494"/>
</dbReference>
<dbReference type="STRING" id="237561.P43072"/>
<dbReference type="EnsemblFungi" id="CR_05650W_A-T">
    <property type="protein sequence ID" value="CR_05650W_A-T-p1"/>
    <property type="gene ID" value="CR_05650W_A"/>
</dbReference>
<dbReference type="GeneID" id="3646689"/>
<dbReference type="KEGG" id="cal:CAALFM_CR05650WA"/>
<dbReference type="CGD" id="CAL0000177227">
    <property type="gene designation" value="BRF1"/>
</dbReference>
<dbReference type="VEuPathDB" id="FungiDB:CR_05650W_A"/>
<dbReference type="eggNOG" id="KOG1598">
    <property type="taxonomic scope" value="Eukaryota"/>
</dbReference>
<dbReference type="HOGENOM" id="CLU_010293_3_3_1"/>
<dbReference type="InParanoid" id="P43072"/>
<dbReference type="OMA" id="EPPCKVM"/>
<dbReference type="OrthoDB" id="511529at2759"/>
<dbReference type="PRO" id="PR:P43072"/>
<dbReference type="Proteomes" id="UP000000559">
    <property type="component" value="Chromosome R"/>
</dbReference>
<dbReference type="GO" id="GO:0005634">
    <property type="term" value="C:nucleus"/>
    <property type="evidence" value="ECO:0000318"/>
    <property type="project" value="GO_Central"/>
</dbReference>
<dbReference type="GO" id="GO:0000126">
    <property type="term" value="C:transcription factor TFIIIB complex"/>
    <property type="evidence" value="ECO:0000250"/>
    <property type="project" value="CGD"/>
</dbReference>
<dbReference type="GO" id="GO:0097550">
    <property type="term" value="C:transcription preinitiation complex"/>
    <property type="evidence" value="ECO:0000318"/>
    <property type="project" value="GO_Central"/>
</dbReference>
<dbReference type="GO" id="GO:0000994">
    <property type="term" value="F:RNA polymerase III core binding"/>
    <property type="evidence" value="ECO:0007669"/>
    <property type="project" value="EnsemblFungi"/>
</dbReference>
<dbReference type="GO" id="GO:0000995">
    <property type="term" value="F:RNA polymerase III general transcription initiation factor activity"/>
    <property type="evidence" value="ECO:0000318"/>
    <property type="project" value="GO_Central"/>
</dbReference>
<dbReference type="GO" id="GO:0001006">
    <property type="term" value="F:RNA polymerase III type 3 promoter sequence-specific DNA binding"/>
    <property type="evidence" value="ECO:0000318"/>
    <property type="project" value="GO_Central"/>
</dbReference>
<dbReference type="GO" id="GO:0017025">
    <property type="term" value="F:TBP-class protein binding"/>
    <property type="evidence" value="ECO:0007669"/>
    <property type="project" value="EnsemblFungi"/>
</dbReference>
<dbReference type="GO" id="GO:0001156">
    <property type="term" value="F:TFIIIC-class transcription factor complex binding"/>
    <property type="evidence" value="ECO:0007669"/>
    <property type="project" value="EnsemblFungi"/>
</dbReference>
<dbReference type="GO" id="GO:0008270">
    <property type="term" value="F:zinc ion binding"/>
    <property type="evidence" value="ECO:0007669"/>
    <property type="project" value="UniProtKB-KW"/>
</dbReference>
<dbReference type="GO" id="GO:0006352">
    <property type="term" value="P:DNA-templated transcription initiation"/>
    <property type="evidence" value="ECO:0000318"/>
    <property type="project" value="GO_Central"/>
</dbReference>
<dbReference type="GO" id="GO:0001112">
    <property type="term" value="P:DNA-templated transcription open complex formation"/>
    <property type="evidence" value="ECO:0007669"/>
    <property type="project" value="EnsemblFungi"/>
</dbReference>
<dbReference type="GO" id="GO:0006359">
    <property type="term" value="P:regulation of transcription by RNA polymerase III"/>
    <property type="evidence" value="ECO:0007669"/>
    <property type="project" value="EnsemblFungi"/>
</dbReference>
<dbReference type="GO" id="GO:0070898">
    <property type="term" value="P:RNA polymerase III preinitiation complex assembly"/>
    <property type="evidence" value="ECO:0007669"/>
    <property type="project" value="EnsemblFungi"/>
</dbReference>
<dbReference type="GO" id="GO:0006383">
    <property type="term" value="P:transcription by RNA polymerase III"/>
    <property type="evidence" value="ECO:0000318"/>
    <property type="project" value="GO_Central"/>
</dbReference>
<dbReference type="GO" id="GO:0006384">
    <property type="term" value="P:transcription initiation at RNA polymerase III promoter"/>
    <property type="evidence" value="ECO:0000250"/>
    <property type="project" value="CGD"/>
</dbReference>
<dbReference type="CDD" id="cd20553">
    <property type="entry name" value="CYCLIN_TFIIIB90_rpt1"/>
    <property type="match status" value="1"/>
</dbReference>
<dbReference type="CDD" id="cd20554">
    <property type="entry name" value="CYCLIN_TFIIIB90_rpt2"/>
    <property type="match status" value="1"/>
</dbReference>
<dbReference type="FunFam" id="2.20.25.10:FF:000012">
    <property type="entry name" value="Putative transcription factor IIIB 90 kDa subunit"/>
    <property type="match status" value="1"/>
</dbReference>
<dbReference type="FunFam" id="1.10.472.10:FF:000002">
    <property type="entry name" value="Transcription factor IIIB 90 kDa subunit"/>
    <property type="match status" value="1"/>
</dbReference>
<dbReference type="FunFam" id="1.10.472.10:FF:000007">
    <property type="entry name" value="Transcription factor IIIB 90 kDa subunit"/>
    <property type="match status" value="1"/>
</dbReference>
<dbReference type="FunFam" id="1.20.5.650:FF:000004">
    <property type="entry name" value="Transcription factor TFIIIB subunit"/>
    <property type="match status" value="1"/>
</dbReference>
<dbReference type="Gene3D" id="2.20.25.10">
    <property type="match status" value="1"/>
</dbReference>
<dbReference type="Gene3D" id="1.10.472.10">
    <property type="entry name" value="Cyclin-like"/>
    <property type="match status" value="2"/>
</dbReference>
<dbReference type="Gene3D" id="1.20.5.650">
    <property type="entry name" value="Single helix bin"/>
    <property type="match status" value="1"/>
</dbReference>
<dbReference type="InterPro" id="IPR011665">
    <property type="entry name" value="BRF1_TBP-bd_dom"/>
</dbReference>
<dbReference type="InterPro" id="IPR013763">
    <property type="entry name" value="Cyclin-like_dom"/>
</dbReference>
<dbReference type="InterPro" id="IPR036915">
    <property type="entry name" value="Cyclin-like_sf"/>
</dbReference>
<dbReference type="InterPro" id="IPR000812">
    <property type="entry name" value="TFIIB"/>
</dbReference>
<dbReference type="InterPro" id="IPR023486">
    <property type="entry name" value="TFIIB_CS"/>
</dbReference>
<dbReference type="InterPro" id="IPR013150">
    <property type="entry name" value="TFIIB_cyclin"/>
</dbReference>
<dbReference type="InterPro" id="IPR013137">
    <property type="entry name" value="Znf_TFIIB"/>
</dbReference>
<dbReference type="PANTHER" id="PTHR11618:SF4">
    <property type="entry name" value="TRANSCRIPTION FACTOR IIIB 90 KDA SUBUNIT"/>
    <property type="match status" value="1"/>
</dbReference>
<dbReference type="PANTHER" id="PTHR11618">
    <property type="entry name" value="TRANSCRIPTION INITIATION FACTOR IIB-RELATED"/>
    <property type="match status" value="1"/>
</dbReference>
<dbReference type="Pfam" id="PF07741">
    <property type="entry name" value="BRF1"/>
    <property type="match status" value="1"/>
</dbReference>
<dbReference type="Pfam" id="PF00382">
    <property type="entry name" value="TFIIB"/>
    <property type="match status" value="2"/>
</dbReference>
<dbReference type="Pfam" id="PF08271">
    <property type="entry name" value="Zn_Ribbon_TF"/>
    <property type="match status" value="1"/>
</dbReference>
<dbReference type="PRINTS" id="PR00685">
    <property type="entry name" value="TIFACTORIIB"/>
</dbReference>
<dbReference type="SMART" id="SM00385">
    <property type="entry name" value="CYCLIN"/>
    <property type="match status" value="2"/>
</dbReference>
<dbReference type="SUPFAM" id="SSF47954">
    <property type="entry name" value="Cyclin-like"/>
    <property type="match status" value="2"/>
</dbReference>
<dbReference type="SUPFAM" id="SSF57783">
    <property type="entry name" value="Zinc beta-ribbon"/>
    <property type="match status" value="1"/>
</dbReference>
<dbReference type="PROSITE" id="PS00782">
    <property type="entry name" value="TFIIB"/>
    <property type="match status" value="2"/>
</dbReference>
<dbReference type="PROSITE" id="PS51134">
    <property type="entry name" value="ZF_TFIIB"/>
    <property type="match status" value="1"/>
</dbReference>
<feature type="chain" id="PRO_0000119343" description="Transcription factor IIIB 70 kDa subunit">
    <location>
        <begin position="1"/>
        <end position="553"/>
    </location>
</feature>
<feature type="repeat" description="1">
    <location>
        <begin position="98"/>
        <end position="174"/>
    </location>
</feature>
<feature type="repeat" description="2">
    <location>
        <begin position="193"/>
        <end position="272"/>
    </location>
</feature>
<feature type="zinc finger region" description="TFIIB-type" evidence="1">
    <location>
        <begin position="6"/>
        <end position="39"/>
    </location>
</feature>
<feature type="region of interest" description="Interaction with TBP and with the Pol III subunit C34">
    <location>
        <begin position="98"/>
        <end position="272"/>
    </location>
</feature>
<feature type="region of interest" description="Interaction with TBP">
    <location>
        <begin position="281"/>
        <end position="553"/>
    </location>
</feature>
<feature type="region of interest" description="Disordered" evidence="2">
    <location>
        <begin position="473"/>
        <end position="523"/>
    </location>
</feature>
<feature type="compositionally biased region" description="Low complexity" evidence="2">
    <location>
        <begin position="480"/>
        <end position="489"/>
    </location>
</feature>
<feature type="binding site" evidence="1">
    <location>
        <position position="10"/>
    </location>
    <ligand>
        <name>Zn(2+)</name>
        <dbReference type="ChEBI" id="CHEBI:29105"/>
    </ligand>
</feature>
<feature type="binding site" evidence="1">
    <location>
        <position position="13"/>
    </location>
    <ligand>
        <name>Zn(2+)</name>
        <dbReference type="ChEBI" id="CHEBI:29105"/>
    </ligand>
</feature>
<feature type="binding site" evidence="1">
    <location>
        <position position="31"/>
    </location>
    <ligand>
        <name>Zn(2+)</name>
        <dbReference type="ChEBI" id="CHEBI:29105"/>
    </ligand>
</feature>
<feature type="binding site" evidence="1">
    <location>
        <position position="34"/>
    </location>
    <ligand>
        <name>Zn(2+)</name>
        <dbReference type="ChEBI" id="CHEBI:29105"/>
    </ligand>
</feature>
<gene>
    <name type="primary">TDS4</name>
    <name type="synonym">BRF</name>
    <name type="synonym">BRF1</name>
    <name type="ordered locus">CAALFM_CR05650WA</name>
    <name type="ORF">CaO19.13970</name>
    <name type="ORF">CaO19.6649</name>
</gene>
<evidence type="ECO:0000255" key="1">
    <source>
        <dbReference type="PROSITE-ProRule" id="PRU00469"/>
    </source>
</evidence>
<evidence type="ECO:0000256" key="2">
    <source>
        <dbReference type="SAM" id="MobiDB-lite"/>
    </source>
</evidence>
<evidence type="ECO:0000305" key="3"/>